<gene>
    <name evidence="1" type="primary">acpP</name>
    <name type="ordered locus">RL1559</name>
</gene>
<name>ACP_RHIJ3</name>
<reference key="1">
    <citation type="journal article" date="2006" name="Genome Biol.">
        <title>The genome of Rhizobium leguminosarum has recognizable core and accessory components.</title>
        <authorList>
            <person name="Young J.P.W."/>
            <person name="Crossman L.C."/>
            <person name="Johnston A.W.B."/>
            <person name="Thomson N.R."/>
            <person name="Ghazoui Z.F."/>
            <person name="Hull K.H."/>
            <person name="Wexler M."/>
            <person name="Curson A.R.J."/>
            <person name="Todd J.D."/>
            <person name="Poole P.S."/>
            <person name="Mauchline T.H."/>
            <person name="East A.K."/>
            <person name="Quail M.A."/>
            <person name="Churcher C."/>
            <person name="Arrowsmith C."/>
            <person name="Cherevach I."/>
            <person name="Chillingworth T."/>
            <person name="Clarke K."/>
            <person name="Cronin A."/>
            <person name="Davis P."/>
            <person name="Fraser A."/>
            <person name="Hance Z."/>
            <person name="Hauser H."/>
            <person name="Jagels K."/>
            <person name="Moule S."/>
            <person name="Mungall K."/>
            <person name="Norbertczak H."/>
            <person name="Rabbinowitsch E."/>
            <person name="Sanders M."/>
            <person name="Simmonds M."/>
            <person name="Whitehead S."/>
            <person name="Parkhill J."/>
        </authorList>
    </citation>
    <scope>NUCLEOTIDE SEQUENCE [LARGE SCALE GENOMIC DNA]</scope>
    <source>
        <strain>DSM 114642 / LMG 32736 / 3841</strain>
    </source>
</reference>
<sequence>MSDIAERVKKIVIDHLGVDADKVVESASFIDDLGADSLDTVELVMAFEEEFGVEIPDDAADSILTVGDAVKFIEKAQA</sequence>
<keyword id="KW-0963">Cytoplasm</keyword>
<keyword id="KW-0275">Fatty acid biosynthesis</keyword>
<keyword id="KW-0276">Fatty acid metabolism</keyword>
<keyword id="KW-0444">Lipid biosynthesis</keyword>
<keyword id="KW-0443">Lipid metabolism</keyword>
<keyword id="KW-0596">Phosphopantetheine</keyword>
<keyword id="KW-0597">Phosphoprotein</keyword>
<accession>Q1MJ06</accession>
<proteinExistence type="inferred from homology"/>
<protein>
    <recommendedName>
        <fullName evidence="1">Acyl carrier protein</fullName>
        <shortName evidence="1">ACP</shortName>
    </recommendedName>
</protein>
<organism>
    <name type="scientific">Rhizobium johnstonii (strain DSM 114642 / LMG 32736 / 3841)</name>
    <name type="common">Rhizobium leguminosarum bv. viciae</name>
    <dbReference type="NCBI Taxonomy" id="216596"/>
    <lineage>
        <taxon>Bacteria</taxon>
        <taxon>Pseudomonadati</taxon>
        <taxon>Pseudomonadota</taxon>
        <taxon>Alphaproteobacteria</taxon>
        <taxon>Hyphomicrobiales</taxon>
        <taxon>Rhizobiaceae</taxon>
        <taxon>Rhizobium/Agrobacterium group</taxon>
        <taxon>Rhizobium</taxon>
        <taxon>Rhizobium johnstonii</taxon>
    </lineage>
</organism>
<feature type="chain" id="PRO_1000066670" description="Acyl carrier protein">
    <location>
        <begin position="1"/>
        <end position="78"/>
    </location>
</feature>
<feature type="domain" description="Carrier" evidence="2">
    <location>
        <begin position="2"/>
        <end position="77"/>
    </location>
</feature>
<feature type="modified residue" description="O-(pantetheine 4'-phosphoryl)serine" evidence="2">
    <location>
        <position position="37"/>
    </location>
</feature>
<evidence type="ECO:0000255" key="1">
    <source>
        <dbReference type="HAMAP-Rule" id="MF_01217"/>
    </source>
</evidence>
<evidence type="ECO:0000255" key="2">
    <source>
        <dbReference type="PROSITE-ProRule" id="PRU00258"/>
    </source>
</evidence>
<dbReference type="EMBL" id="AM236080">
    <property type="protein sequence ID" value="CAK07054.1"/>
    <property type="molecule type" value="Genomic_DNA"/>
</dbReference>
<dbReference type="RefSeq" id="WP_003547058.1">
    <property type="nucleotide sequence ID" value="NC_008380.1"/>
</dbReference>
<dbReference type="SMR" id="Q1MJ06"/>
<dbReference type="EnsemblBacteria" id="CAK07054">
    <property type="protein sequence ID" value="CAK07054"/>
    <property type="gene ID" value="RL1559"/>
</dbReference>
<dbReference type="KEGG" id="rle:RL1559"/>
<dbReference type="eggNOG" id="COG0236">
    <property type="taxonomic scope" value="Bacteria"/>
</dbReference>
<dbReference type="HOGENOM" id="CLU_108696_5_1_5"/>
<dbReference type="UniPathway" id="UPA00094"/>
<dbReference type="Proteomes" id="UP000006575">
    <property type="component" value="Chromosome"/>
</dbReference>
<dbReference type="GO" id="GO:0005829">
    <property type="term" value="C:cytosol"/>
    <property type="evidence" value="ECO:0007669"/>
    <property type="project" value="TreeGrafter"/>
</dbReference>
<dbReference type="GO" id="GO:0016020">
    <property type="term" value="C:membrane"/>
    <property type="evidence" value="ECO:0007669"/>
    <property type="project" value="GOC"/>
</dbReference>
<dbReference type="GO" id="GO:0000035">
    <property type="term" value="F:acyl binding"/>
    <property type="evidence" value="ECO:0007669"/>
    <property type="project" value="TreeGrafter"/>
</dbReference>
<dbReference type="GO" id="GO:0000036">
    <property type="term" value="F:acyl carrier activity"/>
    <property type="evidence" value="ECO:0007669"/>
    <property type="project" value="UniProtKB-UniRule"/>
</dbReference>
<dbReference type="GO" id="GO:0031177">
    <property type="term" value="F:phosphopantetheine binding"/>
    <property type="evidence" value="ECO:0007669"/>
    <property type="project" value="InterPro"/>
</dbReference>
<dbReference type="GO" id="GO:0009245">
    <property type="term" value="P:lipid A biosynthetic process"/>
    <property type="evidence" value="ECO:0007669"/>
    <property type="project" value="TreeGrafter"/>
</dbReference>
<dbReference type="FunFam" id="1.10.1200.10:FF:000001">
    <property type="entry name" value="Acyl carrier protein"/>
    <property type="match status" value="1"/>
</dbReference>
<dbReference type="Gene3D" id="1.10.1200.10">
    <property type="entry name" value="ACP-like"/>
    <property type="match status" value="1"/>
</dbReference>
<dbReference type="HAMAP" id="MF_01217">
    <property type="entry name" value="Acyl_carrier"/>
    <property type="match status" value="1"/>
</dbReference>
<dbReference type="InterPro" id="IPR003231">
    <property type="entry name" value="ACP"/>
</dbReference>
<dbReference type="InterPro" id="IPR036736">
    <property type="entry name" value="ACP-like_sf"/>
</dbReference>
<dbReference type="InterPro" id="IPR020806">
    <property type="entry name" value="PKS_PP-bd"/>
</dbReference>
<dbReference type="InterPro" id="IPR009081">
    <property type="entry name" value="PP-bd_ACP"/>
</dbReference>
<dbReference type="InterPro" id="IPR006162">
    <property type="entry name" value="Ppantetheine_attach_site"/>
</dbReference>
<dbReference type="NCBIfam" id="TIGR00517">
    <property type="entry name" value="acyl_carrier"/>
    <property type="match status" value="1"/>
</dbReference>
<dbReference type="NCBIfam" id="NF002148">
    <property type="entry name" value="PRK00982.1-2"/>
    <property type="match status" value="1"/>
</dbReference>
<dbReference type="NCBIfam" id="NF002149">
    <property type="entry name" value="PRK00982.1-3"/>
    <property type="match status" value="1"/>
</dbReference>
<dbReference type="NCBIfam" id="NF002150">
    <property type="entry name" value="PRK00982.1-4"/>
    <property type="match status" value="1"/>
</dbReference>
<dbReference type="NCBIfam" id="NF002151">
    <property type="entry name" value="PRK00982.1-5"/>
    <property type="match status" value="1"/>
</dbReference>
<dbReference type="PANTHER" id="PTHR20863">
    <property type="entry name" value="ACYL CARRIER PROTEIN"/>
    <property type="match status" value="1"/>
</dbReference>
<dbReference type="PANTHER" id="PTHR20863:SF76">
    <property type="entry name" value="CARRIER DOMAIN-CONTAINING PROTEIN"/>
    <property type="match status" value="1"/>
</dbReference>
<dbReference type="Pfam" id="PF00550">
    <property type="entry name" value="PP-binding"/>
    <property type="match status" value="1"/>
</dbReference>
<dbReference type="SMART" id="SM00823">
    <property type="entry name" value="PKS_PP"/>
    <property type="match status" value="1"/>
</dbReference>
<dbReference type="SUPFAM" id="SSF47336">
    <property type="entry name" value="ACP-like"/>
    <property type="match status" value="1"/>
</dbReference>
<dbReference type="PROSITE" id="PS50075">
    <property type="entry name" value="CARRIER"/>
    <property type="match status" value="1"/>
</dbReference>
<dbReference type="PROSITE" id="PS00012">
    <property type="entry name" value="PHOSPHOPANTETHEINE"/>
    <property type="match status" value="1"/>
</dbReference>
<comment type="function">
    <text evidence="1">Carrier of the growing fatty acid chain in fatty acid biosynthesis.</text>
</comment>
<comment type="pathway">
    <text evidence="1">Lipid metabolism; fatty acid biosynthesis.</text>
</comment>
<comment type="subcellular location">
    <subcellularLocation>
        <location evidence="1">Cytoplasm</location>
    </subcellularLocation>
</comment>
<comment type="PTM">
    <text evidence="1">4'-phosphopantetheine is transferred from CoA to a specific serine of apo-ACP by AcpS. This modification is essential for activity because fatty acids are bound in thioester linkage to the sulfhydryl of the prosthetic group.</text>
</comment>
<comment type="similarity">
    <text evidence="1">Belongs to the acyl carrier protein (ACP) family.</text>
</comment>